<evidence type="ECO:0000269" key="1">
    <source>
    </source>
</evidence>
<evidence type="ECO:0000269" key="2">
    <source>
    </source>
</evidence>
<evidence type="ECO:0000269" key="3">
    <source>
    </source>
</evidence>
<evidence type="ECO:0000305" key="4"/>
<evidence type="ECO:0007829" key="5">
    <source>
        <dbReference type="PDB" id="1AGJ"/>
    </source>
</evidence>
<evidence type="ECO:0007829" key="6">
    <source>
        <dbReference type="PDB" id="1EXF"/>
    </source>
</evidence>
<organism>
    <name type="scientific">Staphylococcus aureus</name>
    <dbReference type="NCBI Taxonomy" id="1280"/>
    <lineage>
        <taxon>Bacteria</taxon>
        <taxon>Bacillati</taxon>
        <taxon>Bacillota</taxon>
        <taxon>Bacilli</taxon>
        <taxon>Bacillales</taxon>
        <taxon>Staphylococcaceae</taxon>
        <taxon>Staphylococcus</taxon>
    </lineage>
</organism>
<reference key="1">
    <citation type="journal article" date="1987" name="J. Bacteriol.">
        <title>Sequence determination and comparison of the exfoliative toxin A and toxin B genes from Staphylococcus aureus.</title>
        <authorList>
            <person name="Lee C.Y."/>
            <person name="Schmidt J.J."/>
            <person name="Johnson-Winegar A.D."/>
            <person name="Spero L."/>
            <person name="Iandolo J.J."/>
        </authorList>
    </citation>
    <scope>NUCLEOTIDE SEQUENCE [GENOMIC DNA]</scope>
    <scope>PARTIAL PROTEIN SEQUENCE</scope>
    <source>
        <strain>UT0002</strain>
    </source>
</reference>
<reference key="2">
    <citation type="journal article" date="1987" name="J. Bacteriol.">
        <title>Nucleotide sequence of the epidermolytic toxin A gene of Staphylococcus aureus.</title>
        <authorList>
            <person name="O'Toole P.W."/>
            <person name="Foster T.J."/>
        </authorList>
    </citation>
    <scope>NUCLEOTIDE SEQUENCE [GENOMIC DNA]</scope>
    <source>
        <strain>TC16</strain>
    </source>
</reference>
<reference key="3">
    <citation type="journal article" date="1988" name="J. Gen. Microbiol.">
        <title>DNA sequencing of the eta gene coding for staphylococcal exfoliative toxin serotype A.</title>
        <authorList>
            <person name="Sakurai S."/>
            <person name="Suzuki H."/>
            <person name="Kondo I."/>
        </authorList>
    </citation>
    <scope>NUCLEOTIDE SEQUENCE [GENOMIC DNA]</scope>
    <source>
        <strain>ZM</strain>
    </source>
</reference>
<reference key="4">
    <citation type="journal article" date="1990" name="Biochem. J.">
        <title>The reactive serine residue of epidermolytic toxin A.</title>
        <authorList>
            <person name="Bailey C.J."/>
            <person name="Smith T.P."/>
        </authorList>
    </citation>
    <scope>FUNCTION</scope>
</reference>
<reference key="5">
    <citation type="journal article" date="1990" name="FEBS Lett.">
        <title>The epidermolytic toxins are serine proteases.</title>
        <authorList>
            <person name="Dancer S.J."/>
            <person name="Garrat R."/>
            <person name="Saldanha J."/>
            <person name="Jhoti H."/>
            <person name="Evans R."/>
        </authorList>
    </citation>
    <scope>FUNCTION</scope>
</reference>
<reference key="6">
    <citation type="journal article" date="1991" name="FEMS Microbiol. Lett.">
        <title>The role of the serine protease active site in the mode of action of epidermolytic toxin of Staphylococcus aureus.</title>
        <authorList>
            <person name="Redpath M.B."/>
            <person name="Foster T.J."/>
            <person name="Bailey C.J."/>
        </authorList>
    </citation>
    <scope>MUTAGENESIS OF SER-233</scope>
</reference>
<reference key="7">
    <citation type="journal article" date="1997" name="Biochemistry">
        <title>The structure of the superantigen exfoliative toxin A suggests a novel regulation as a serine protease.</title>
        <authorList>
            <person name="Vath G.M."/>
            <person name="Earhart C.A."/>
            <person name="Rago J.V."/>
            <person name="Kim M.H."/>
            <person name="Bohach G.A."/>
            <person name="Schlievert P.M."/>
            <person name="Ohlendorf D.H."/>
        </authorList>
    </citation>
    <scope>X-RAY CRYSTALLOGRAPHY (2.1 ANGSTROMS)</scope>
    <source>
        <strain>MNEV</strain>
    </source>
</reference>
<reference key="8">
    <citation type="journal article" date="1997" name="Structure">
        <title>The structure of Staphylococcus aureus epidermolytic toxin A, an atypic serine protease, at 1.7-A resolution.</title>
        <authorList>
            <person name="Cavarelli J."/>
            <person name="Prevost G."/>
            <person name="Bourguet W."/>
            <person name="Moulinier L."/>
            <person name="Chevrier B."/>
            <person name="Delagoutte B."/>
            <person name="Bilwes A."/>
            <person name="Mourey L."/>
            <person name="Rifai S."/>
            <person name="Piemont Y."/>
            <person name="Moras D."/>
        </authorList>
    </citation>
    <scope>X-RAY CRYSTALLOGRAPHY (1.7 ANGSTROMS)</scope>
</reference>
<accession>P09331</accession>
<sequence length="280" mass="31077">MNNSKIISKVLLSLSLFTVGASAFVIQDELMQKNHAKAEVSAEEIKKHEEKWNKYYGVNAFNLPKELFSKVDEKDRQKYPYNTIGNVFVKGQTSATGVLIGKNTVLTNRHIAKFANGDPSKVSFRPSINTDDNGNTETPYGEYEVKEILQEPFGAGVDLALIRLKPDQNGVSLGDKISPAKIGTSNDLKDGDKLELIGYPFDHKVNQMHRSEIELTTLSRGLRYYGFTVPGNSGSGIFNSNGELVGIHSSKVSHLDREHQINYGVGIGNYVKRIINEKNE</sequence>
<gene>
    <name type="primary">eta</name>
</gene>
<keyword id="KW-0002">3D-structure</keyword>
<keyword id="KW-0106">Calcium</keyword>
<keyword id="KW-0903">Direct protein sequencing</keyword>
<keyword id="KW-0378">Hydrolase</keyword>
<keyword id="KW-0645">Protease</keyword>
<keyword id="KW-0720">Serine protease</keyword>
<keyword id="KW-0732">Signal</keyword>
<keyword id="KW-0800">Toxin</keyword>
<keyword id="KW-0843">Virulence</keyword>
<protein>
    <recommendedName>
        <fullName>Exfoliative toxin A</fullName>
        <ecNumber>3.4.21.-</ecNumber>
    </recommendedName>
    <alternativeName>
        <fullName>Epidermolytic toxin A</fullName>
    </alternativeName>
</protein>
<proteinExistence type="evidence at protein level"/>
<comment type="function">
    <text evidence="2 3">Has serine protease-like properties and binds to the skin protein profilaggrin. Cleaves substrates after acidic residues. Exfoliative toxins cause impetigous diseases commonly referred as staphylococcal scalded skin syndrome (SSSS).</text>
</comment>
<comment type="cofactor">
    <cofactor>
        <name>Ca(2+)</name>
        <dbReference type="ChEBI" id="CHEBI:29108"/>
    </cofactor>
</comment>
<comment type="similarity">
    <text evidence="4">Belongs to the peptidase S1B family.</text>
</comment>
<dbReference type="EC" id="3.4.21.-"/>
<dbReference type="EMBL" id="M17357">
    <property type="protein sequence ID" value="AAA26626.1"/>
    <property type="molecule type" value="Genomic_DNA"/>
</dbReference>
<dbReference type="EMBL" id="M17347">
    <property type="protein sequence ID" value="AAA26625.1"/>
    <property type="molecule type" value="Genomic_DNA"/>
</dbReference>
<dbReference type="EMBL" id="L25372">
    <property type="protein sequence ID" value="AAA17490.1"/>
    <property type="molecule type" value="Genomic_DNA"/>
</dbReference>
<dbReference type="PIR" id="A26680">
    <property type="entry name" value="PRSAEA"/>
</dbReference>
<dbReference type="RefSeq" id="WP_001065781.1">
    <property type="nucleotide sequence ID" value="NZ_WKGU01000030.1"/>
</dbReference>
<dbReference type="PDB" id="1AGJ">
    <property type="method" value="X-ray"/>
    <property type="resolution" value="1.70 A"/>
    <property type="chains" value="A/B=39-280"/>
</dbReference>
<dbReference type="PDB" id="1DUA">
    <property type="method" value="X-ray"/>
    <property type="resolution" value="2.00 A"/>
    <property type="chains" value="A=39-280"/>
</dbReference>
<dbReference type="PDB" id="1DUE">
    <property type="method" value="X-ray"/>
    <property type="resolution" value="2.00 A"/>
    <property type="chains" value="A=39-280"/>
</dbReference>
<dbReference type="PDB" id="1EXF">
    <property type="method" value="X-ray"/>
    <property type="resolution" value="2.10 A"/>
    <property type="chains" value="A=39-280"/>
</dbReference>
<dbReference type="PDBsum" id="1AGJ"/>
<dbReference type="PDBsum" id="1DUA"/>
<dbReference type="PDBsum" id="1DUE"/>
<dbReference type="PDBsum" id="1EXF"/>
<dbReference type="SMR" id="P09331"/>
<dbReference type="MEROPS" id="S01.270"/>
<dbReference type="EvolutionaryTrace" id="P09331"/>
<dbReference type="PRO" id="PR:P09331"/>
<dbReference type="GO" id="GO:0004252">
    <property type="term" value="F:serine-type endopeptidase activity"/>
    <property type="evidence" value="ECO:0007669"/>
    <property type="project" value="InterPro"/>
</dbReference>
<dbReference type="GO" id="GO:0090729">
    <property type="term" value="F:toxin activity"/>
    <property type="evidence" value="ECO:0007669"/>
    <property type="project" value="UniProtKB-KW"/>
</dbReference>
<dbReference type="GO" id="GO:0006508">
    <property type="term" value="P:proteolysis"/>
    <property type="evidence" value="ECO:0007669"/>
    <property type="project" value="UniProtKB-KW"/>
</dbReference>
<dbReference type="GO" id="GO:0141023">
    <property type="term" value="P:symbiont-mediated disruption of host cell-cell adhesion"/>
    <property type="evidence" value="ECO:0000269"/>
    <property type="project" value="SigSci"/>
</dbReference>
<dbReference type="Gene3D" id="2.40.10.10">
    <property type="entry name" value="Trypsin-like serine proteases"/>
    <property type="match status" value="2"/>
</dbReference>
<dbReference type="InterPro" id="IPR050966">
    <property type="entry name" value="Glutamyl_endopeptidase"/>
</dbReference>
<dbReference type="InterPro" id="IPR009003">
    <property type="entry name" value="Peptidase_S1_PA"/>
</dbReference>
<dbReference type="InterPro" id="IPR043504">
    <property type="entry name" value="Peptidase_S1_PA_chymotrypsin"/>
</dbReference>
<dbReference type="InterPro" id="IPR008256">
    <property type="entry name" value="Peptidase_S1B"/>
</dbReference>
<dbReference type="InterPro" id="IPR008353">
    <property type="entry name" value="Peptidase_S1B_tx"/>
</dbReference>
<dbReference type="InterPro" id="IPR028301">
    <property type="entry name" value="V8_his_AS"/>
</dbReference>
<dbReference type="InterPro" id="IPR000126">
    <property type="entry name" value="V8_ser_AS"/>
</dbReference>
<dbReference type="PANTHER" id="PTHR15462">
    <property type="entry name" value="SERINE PROTEASE"/>
    <property type="match status" value="1"/>
</dbReference>
<dbReference type="PANTHER" id="PTHR15462:SF8">
    <property type="entry name" value="SERINE PROTEASE"/>
    <property type="match status" value="1"/>
</dbReference>
<dbReference type="Pfam" id="PF13365">
    <property type="entry name" value="Trypsin_2"/>
    <property type="match status" value="1"/>
</dbReference>
<dbReference type="PRINTS" id="PR01774">
    <property type="entry name" value="EXFOLTOXIN"/>
</dbReference>
<dbReference type="PRINTS" id="PR00839">
    <property type="entry name" value="V8PROTEASE"/>
</dbReference>
<dbReference type="SUPFAM" id="SSF50494">
    <property type="entry name" value="Trypsin-like serine proteases"/>
    <property type="match status" value="1"/>
</dbReference>
<dbReference type="PROSITE" id="PS00672">
    <property type="entry name" value="V8_HIS"/>
    <property type="match status" value="1"/>
</dbReference>
<dbReference type="PROSITE" id="PS00673">
    <property type="entry name" value="V8_SER"/>
    <property type="match status" value="1"/>
</dbReference>
<name>ETA_STAAU</name>
<feature type="signal peptide">
    <location>
        <begin position="1"/>
        <end position="38"/>
    </location>
</feature>
<feature type="chain" id="PRO_0000026905" description="Exfoliative toxin A">
    <location>
        <begin position="39"/>
        <end position="280"/>
    </location>
</feature>
<feature type="active site" description="Charge relay system">
    <location>
        <position position="110"/>
    </location>
</feature>
<feature type="active site" description="Charge relay system">
    <location>
        <position position="158"/>
    </location>
</feature>
<feature type="active site" description="Charge relay system">
    <location>
        <position position="233"/>
    </location>
</feature>
<feature type="mutagenesis site" description="Loss of toxicity." evidence="1">
    <original>S</original>
    <variation>G</variation>
    <location>
        <position position="233"/>
    </location>
</feature>
<feature type="helix" evidence="5">
    <location>
        <begin position="42"/>
        <end position="56"/>
    </location>
</feature>
<feature type="helix" evidence="5">
    <location>
        <begin position="60"/>
        <end position="62"/>
    </location>
</feature>
<feature type="turn" evidence="5">
    <location>
        <begin position="65"/>
        <end position="67"/>
    </location>
</feature>
<feature type="strand" evidence="5">
    <location>
        <begin position="68"/>
        <end position="70"/>
    </location>
</feature>
<feature type="helix" evidence="5">
    <location>
        <begin position="75"/>
        <end position="77"/>
    </location>
</feature>
<feature type="helix" evidence="5">
    <location>
        <begin position="81"/>
        <end position="83"/>
    </location>
</feature>
<feature type="strand" evidence="5">
    <location>
        <begin position="84"/>
        <end position="89"/>
    </location>
</feature>
<feature type="turn" evidence="5">
    <location>
        <begin position="90"/>
        <end position="92"/>
    </location>
</feature>
<feature type="strand" evidence="5">
    <location>
        <begin position="93"/>
        <end position="99"/>
    </location>
</feature>
<feature type="strand" evidence="5">
    <location>
        <begin position="101"/>
        <end position="107"/>
    </location>
</feature>
<feature type="helix" evidence="5">
    <location>
        <begin position="109"/>
        <end position="112"/>
    </location>
</feature>
<feature type="helix" evidence="5">
    <location>
        <begin position="113"/>
        <end position="115"/>
    </location>
</feature>
<feature type="helix" evidence="5">
    <location>
        <begin position="119"/>
        <end position="121"/>
    </location>
</feature>
<feature type="strand" evidence="5">
    <location>
        <begin position="122"/>
        <end position="126"/>
    </location>
</feature>
<feature type="strand" evidence="5">
    <location>
        <begin position="143"/>
        <end position="150"/>
    </location>
</feature>
<feature type="strand" evidence="5">
    <location>
        <begin position="160"/>
        <end position="164"/>
    </location>
</feature>
<feature type="helix" evidence="5">
    <location>
        <begin position="173"/>
        <end position="176"/>
    </location>
</feature>
<feature type="helix" evidence="6">
    <location>
        <begin position="185"/>
        <end position="187"/>
    </location>
</feature>
<feature type="strand" evidence="5">
    <location>
        <begin position="193"/>
        <end position="198"/>
    </location>
</feature>
<feature type="turn" evidence="5">
    <location>
        <begin position="201"/>
        <end position="203"/>
    </location>
</feature>
<feature type="strand" evidence="5">
    <location>
        <begin position="209"/>
        <end position="215"/>
    </location>
</feature>
<feature type="helix" evidence="5">
    <location>
        <begin position="218"/>
        <end position="220"/>
    </location>
</feature>
<feature type="strand" evidence="5">
    <location>
        <begin position="221"/>
        <end position="225"/>
    </location>
</feature>
<feature type="helix" evidence="5">
    <location>
        <begin position="230"/>
        <end position="232"/>
    </location>
</feature>
<feature type="strand" evidence="5">
    <location>
        <begin position="236"/>
        <end position="238"/>
    </location>
</feature>
<feature type="strand" evidence="5">
    <location>
        <begin position="242"/>
        <end position="253"/>
    </location>
</feature>
<feature type="strand" evidence="5">
    <location>
        <begin position="260"/>
        <end position="266"/>
    </location>
</feature>
<feature type="helix" evidence="5">
    <location>
        <begin position="269"/>
        <end position="278"/>
    </location>
</feature>